<protein>
    <recommendedName>
        <fullName evidence="1">Acyl-[acyl-carrier-protein]--UDP-N-acetylglucosamine O-acyltransferase</fullName>
        <shortName evidence="1">UDP-N-acetylglucosamine acyltransferase</shortName>
        <ecNumber evidence="1">2.3.1.129</ecNumber>
    </recommendedName>
</protein>
<accession>B1JBP8</accession>
<comment type="function">
    <text evidence="1">Involved in the biosynthesis of lipid A, a phosphorylated glycolipid that anchors the lipopolysaccharide to the outer membrane of the cell.</text>
</comment>
<comment type="catalytic activity">
    <reaction evidence="1">
        <text>a (3R)-hydroxyacyl-[ACP] + UDP-N-acetyl-alpha-D-glucosamine = a UDP-3-O-[(3R)-3-hydroxyacyl]-N-acetyl-alpha-D-glucosamine + holo-[ACP]</text>
        <dbReference type="Rhea" id="RHEA:67812"/>
        <dbReference type="Rhea" id="RHEA-COMP:9685"/>
        <dbReference type="Rhea" id="RHEA-COMP:9945"/>
        <dbReference type="ChEBI" id="CHEBI:57705"/>
        <dbReference type="ChEBI" id="CHEBI:64479"/>
        <dbReference type="ChEBI" id="CHEBI:78827"/>
        <dbReference type="ChEBI" id="CHEBI:173225"/>
        <dbReference type="EC" id="2.3.1.129"/>
    </reaction>
</comment>
<comment type="pathway">
    <text evidence="1">Glycolipid biosynthesis; lipid IV(A) biosynthesis; lipid IV(A) from (3R)-3-hydroxytetradecanoyl-[acyl-carrier-protein] and UDP-N-acetyl-alpha-D-glucosamine: step 1/6.</text>
</comment>
<comment type="subunit">
    <text evidence="1">Homotrimer.</text>
</comment>
<comment type="subcellular location">
    <subcellularLocation>
        <location evidence="1">Cytoplasm</location>
    </subcellularLocation>
</comment>
<comment type="similarity">
    <text evidence="1">Belongs to the transferase hexapeptide repeat family. LpxA subfamily.</text>
</comment>
<feature type="chain" id="PRO_1000122721" description="Acyl-[acyl-carrier-protein]--UDP-N-acetylglucosamine O-acyltransferase">
    <location>
        <begin position="1"/>
        <end position="258"/>
    </location>
</feature>
<reference key="1">
    <citation type="submission" date="2008-02" db="EMBL/GenBank/DDBJ databases">
        <title>Complete sequence of Pseudomonas putida W619.</title>
        <authorList>
            <person name="Copeland A."/>
            <person name="Lucas S."/>
            <person name="Lapidus A."/>
            <person name="Barry K."/>
            <person name="Detter J.C."/>
            <person name="Glavina del Rio T."/>
            <person name="Dalin E."/>
            <person name="Tice H."/>
            <person name="Pitluck S."/>
            <person name="Chain P."/>
            <person name="Malfatti S."/>
            <person name="Shin M."/>
            <person name="Vergez L."/>
            <person name="Schmutz J."/>
            <person name="Larimer F."/>
            <person name="Land M."/>
            <person name="Hauser L."/>
            <person name="Kyrpides N."/>
            <person name="Kim E."/>
            <person name="Taghavi S."/>
            <person name="Vangronsveld D."/>
            <person name="van der Lelie D."/>
            <person name="Richardson P."/>
        </authorList>
    </citation>
    <scope>NUCLEOTIDE SEQUENCE [LARGE SCALE GENOMIC DNA]</scope>
    <source>
        <strain>W619</strain>
    </source>
</reference>
<sequence length="258" mass="28092">MNSIDPRAIIDPSAKLADGVEVGPWSIVGPDVEIGEGTVIGPHVVLKGPTRIGKHNRIYQFSSIGEDTPDLKYKGEPTRLVIGDHNVIREGVTIHRGTVQDRAETTLGDHNLIMAYAHIGHDSVIGNHCILVNNTALAGHVHVGDWAILSGFTLVHQYCHIGAHAFSGMGTAIGKDVPAFVTVFGSPAEARSMNFEGMRRRGFSDEVIHALRRSYKIVYRQGLTVEEAVKELDELAGKHPEVDLFRQSIVNSARGITR</sequence>
<organism>
    <name type="scientific">Pseudomonas putida (strain W619)</name>
    <dbReference type="NCBI Taxonomy" id="390235"/>
    <lineage>
        <taxon>Bacteria</taxon>
        <taxon>Pseudomonadati</taxon>
        <taxon>Pseudomonadota</taxon>
        <taxon>Gammaproteobacteria</taxon>
        <taxon>Pseudomonadales</taxon>
        <taxon>Pseudomonadaceae</taxon>
        <taxon>Pseudomonas</taxon>
    </lineage>
</organism>
<dbReference type="EC" id="2.3.1.129" evidence="1"/>
<dbReference type="EMBL" id="CP000949">
    <property type="protein sequence ID" value="ACA74550.1"/>
    <property type="molecule type" value="Genomic_DNA"/>
</dbReference>
<dbReference type="SMR" id="B1JBP8"/>
<dbReference type="STRING" id="390235.PputW619_4070"/>
<dbReference type="KEGG" id="ppw:PputW619_4070"/>
<dbReference type="eggNOG" id="COG1043">
    <property type="taxonomic scope" value="Bacteria"/>
</dbReference>
<dbReference type="HOGENOM" id="CLU_061249_0_0_6"/>
<dbReference type="OrthoDB" id="9807278at2"/>
<dbReference type="UniPathway" id="UPA00359">
    <property type="reaction ID" value="UER00477"/>
</dbReference>
<dbReference type="GO" id="GO:0005737">
    <property type="term" value="C:cytoplasm"/>
    <property type="evidence" value="ECO:0007669"/>
    <property type="project" value="UniProtKB-SubCell"/>
</dbReference>
<dbReference type="GO" id="GO:0016020">
    <property type="term" value="C:membrane"/>
    <property type="evidence" value="ECO:0007669"/>
    <property type="project" value="GOC"/>
</dbReference>
<dbReference type="GO" id="GO:0008780">
    <property type="term" value="F:acyl-[acyl-carrier-protein]-UDP-N-acetylglucosamine O-acyltransferase activity"/>
    <property type="evidence" value="ECO:0007669"/>
    <property type="project" value="UniProtKB-UniRule"/>
</dbReference>
<dbReference type="GO" id="GO:0009245">
    <property type="term" value="P:lipid A biosynthetic process"/>
    <property type="evidence" value="ECO:0007669"/>
    <property type="project" value="UniProtKB-UniRule"/>
</dbReference>
<dbReference type="CDD" id="cd03351">
    <property type="entry name" value="LbH_UDP-GlcNAc_AT"/>
    <property type="match status" value="1"/>
</dbReference>
<dbReference type="FunFam" id="2.160.10.10:FF:000003">
    <property type="entry name" value="Acyl-[acyl-carrier-protein]--UDP-N-acetylglucosamine O-acyltransferase"/>
    <property type="match status" value="1"/>
</dbReference>
<dbReference type="Gene3D" id="2.160.10.10">
    <property type="entry name" value="Hexapeptide repeat proteins"/>
    <property type="match status" value="1"/>
</dbReference>
<dbReference type="Gene3D" id="1.20.1180.10">
    <property type="entry name" value="Udp N-acetylglucosamine O-acyltransferase, C-terminal domain"/>
    <property type="match status" value="1"/>
</dbReference>
<dbReference type="HAMAP" id="MF_00387">
    <property type="entry name" value="LpxA"/>
    <property type="match status" value="1"/>
</dbReference>
<dbReference type="InterPro" id="IPR029098">
    <property type="entry name" value="Acetyltransf_C"/>
</dbReference>
<dbReference type="InterPro" id="IPR037157">
    <property type="entry name" value="Acetyltransf_C_sf"/>
</dbReference>
<dbReference type="InterPro" id="IPR001451">
    <property type="entry name" value="Hexapep"/>
</dbReference>
<dbReference type="InterPro" id="IPR018357">
    <property type="entry name" value="Hexapep_transf_CS"/>
</dbReference>
<dbReference type="InterPro" id="IPR010137">
    <property type="entry name" value="Lipid_A_LpxA"/>
</dbReference>
<dbReference type="InterPro" id="IPR011004">
    <property type="entry name" value="Trimer_LpxA-like_sf"/>
</dbReference>
<dbReference type="NCBIfam" id="TIGR01852">
    <property type="entry name" value="lipid_A_lpxA"/>
    <property type="match status" value="1"/>
</dbReference>
<dbReference type="NCBIfam" id="NF003657">
    <property type="entry name" value="PRK05289.1"/>
    <property type="match status" value="1"/>
</dbReference>
<dbReference type="PANTHER" id="PTHR43480">
    <property type="entry name" value="ACYL-[ACYL-CARRIER-PROTEIN]--UDP-N-ACETYLGLUCOSAMINE O-ACYLTRANSFERASE"/>
    <property type="match status" value="1"/>
</dbReference>
<dbReference type="PANTHER" id="PTHR43480:SF1">
    <property type="entry name" value="ACYL-[ACYL-CARRIER-PROTEIN]--UDP-N-ACETYLGLUCOSAMINE O-ACYLTRANSFERASE, MITOCHONDRIAL-RELATED"/>
    <property type="match status" value="1"/>
</dbReference>
<dbReference type="Pfam" id="PF13720">
    <property type="entry name" value="Acetyltransf_11"/>
    <property type="match status" value="1"/>
</dbReference>
<dbReference type="Pfam" id="PF00132">
    <property type="entry name" value="Hexapep"/>
    <property type="match status" value="2"/>
</dbReference>
<dbReference type="PIRSF" id="PIRSF000456">
    <property type="entry name" value="UDP-GlcNAc_acltr"/>
    <property type="match status" value="1"/>
</dbReference>
<dbReference type="SUPFAM" id="SSF51161">
    <property type="entry name" value="Trimeric LpxA-like enzymes"/>
    <property type="match status" value="1"/>
</dbReference>
<dbReference type="PROSITE" id="PS00101">
    <property type="entry name" value="HEXAPEP_TRANSFERASES"/>
    <property type="match status" value="1"/>
</dbReference>
<evidence type="ECO:0000255" key="1">
    <source>
        <dbReference type="HAMAP-Rule" id="MF_00387"/>
    </source>
</evidence>
<keyword id="KW-0012">Acyltransferase</keyword>
<keyword id="KW-0963">Cytoplasm</keyword>
<keyword id="KW-0441">Lipid A biosynthesis</keyword>
<keyword id="KW-0444">Lipid biosynthesis</keyword>
<keyword id="KW-0443">Lipid metabolism</keyword>
<keyword id="KW-0677">Repeat</keyword>
<keyword id="KW-0808">Transferase</keyword>
<gene>
    <name evidence="1" type="primary">lpxA</name>
    <name type="ordered locus">PputW619_4070</name>
</gene>
<name>LPXA_PSEPW</name>
<proteinExistence type="inferred from homology"/>